<reference key="1">
    <citation type="submission" date="2008-02" db="EMBL/GenBank/DDBJ databases">
        <title>Complete sequence of Escherichia coli C str. ATCC 8739.</title>
        <authorList>
            <person name="Copeland A."/>
            <person name="Lucas S."/>
            <person name="Lapidus A."/>
            <person name="Glavina del Rio T."/>
            <person name="Dalin E."/>
            <person name="Tice H."/>
            <person name="Bruce D."/>
            <person name="Goodwin L."/>
            <person name="Pitluck S."/>
            <person name="Kiss H."/>
            <person name="Brettin T."/>
            <person name="Detter J.C."/>
            <person name="Han C."/>
            <person name="Kuske C.R."/>
            <person name="Schmutz J."/>
            <person name="Larimer F."/>
            <person name="Land M."/>
            <person name="Hauser L."/>
            <person name="Kyrpides N."/>
            <person name="Mikhailova N."/>
            <person name="Ingram L."/>
            <person name="Richardson P."/>
        </authorList>
    </citation>
    <scope>NUCLEOTIDE SEQUENCE [LARGE SCALE GENOMIC DNA]</scope>
    <source>
        <strain>ATCC 8739 / DSM 1576 / NBRC 3972 / NCIMB 8545 / WDCM 00012 / Crooks</strain>
    </source>
</reference>
<name>ISPH_ECOLC</name>
<keyword id="KW-0004">4Fe-4S</keyword>
<keyword id="KW-0408">Iron</keyword>
<keyword id="KW-0411">Iron-sulfur</keyword>
<keyword id="KW-0414">Isoprene biosynthesis</keyword>
<keyword id="KW-0479">Metal-binding</keyword>
<keyword id="KW-0560">Oxidoreductase</keyword>
<sequence length="316" mass="34705">MQILLANPRGFCAGVDRAISIVENALAIYGAPIYVRHEVVHNRYVVDSLRERGAIFIEQISEVPDGAILIFSAHGVSQAVRNEAKSRDLTVFDATCPLVTKVHMEVARASRRGEESILIGHAGHPEVEGTMGQYSNPEGGMYLVESPDDVWKLTVKNEEKLSFMTQTTLSVDDTSDVIDALRKRFPKIVGPRKDDICYATTNRQEAVRALAEQAEVVLVVGSKNSSNSNRLAELAQRMGKSAFLIDDAKDIQEEWVKEVKCVGVTAGASAPDILVQNVVARLQQLGGGEAIPLEGREENIVFEVPKELRVDIREVD</sequence>
<feature type="chain" id="PRO_1000077515" description="4-hydroxy-3-methylbut-2-enyl diphosphate reductase">
    <location>
        <begin position="1"/>
        <end position="316"/>
    </location>
</feature>
<feature type="active site" description="Proton donor" evidence="1">
    <location>
        <position position="126"/>
    </location>
</feature>
<feature type="binding site" evidence="1">
    <location>
        <position position="12"/>
    </location>
    <ligand>
        <name>[4Fe-4S] cluster</name>
        <dbReference type="ChEBI" id="CHEBI:49883"/>
    </ligand>
</feature>
<feature type="binding site" evidence="1">
    <location>
        <position position="41"/>
    </location>
    <ligand>
        <name>(2E)-4-hydroxy-3-methylbut-2-enyl diphosphate</name>
        <dbReference type="ChEBI" id="CHEBI:128753"/>
    </ligand>
</feature>
<feature type="binding site" evidence="1">
    <location>
        <position position="41"/>
    </location>
    <ligand>
        <name>dimethylallyl diphosphate</name>
        <dbReference type="ChEBI" id="CHEBI:57623"/>
    </ligand>
</feature>
<feature type="binding site" evidence="1">
    <location>
        <position position="41"/>
    </location>
    <ligand>
        <name>isopentenyl diphosphate</name>
        <dbReference type="ChEBI" id="CHEBI:128769"/>
    </ligand>
</feature>
<feature type="binding site" evidence="1">
    <location>
        <position position="74"/>
    </location>
    <ligand>
        <name>(2E)-4-hydroxy-3-methylbut-2-enyl diphosphate</name>
        <dbReference type="ChEBI" id="CHEBI:128753"/>
    </ligand>
</feature>
<feature type="binding site" evidence="1">
    <location>
        <position position="74"/>
    </location>
    <ligand>
        <name>dimethylallyl diphosphate</name>
        <dbReference type="ChEBI" id="CHEBI:57623"/>
    </ligand>
</feature>
<feature type="binding site" evidence="1">
    <location>
        <position position="74"/>
    </location>
    <ligand>
        <name>isopentenyl diphosphate</name>
        <dbReference type="ChEBI" id="CHEBI:128769"/>
    </ligand>
</feature>
<feature type="binding site" evidence="1">
    <location>
        <position position="96"/>
    </location>
    <ligand>
        <name>[4Fe-4S] cluster</name>
        <dbReference type="ChEBI" id="CHEBI:49883"/>
    </ligand>
</feature>
<feature type="binding site" evidence="1">
    <location>
        <position position="124"/>
    </location>
    <ligand>
        <name>(2E)-4-hydroxy-3-methylbut-2-enyl diphosphate</name>
        <dbReference type="ChEBI" id="CHEBI:128753"/>
    </ligand>
</feature>
<feature type="binding site" evidence="1">
    <location>
        <position position="124"/>
    </location>
    <ligand>
        <name>dimethylallyl diphosphate</name>
        <dbReference type="ChEBI" id="CHEBI:57623"/>
    </ligand>
</feature>
<feature type="binding site" evidence="1">
    <location>
        <position position="124"/>
    </location>
    <ligand>
        <name>isopentenyl diphosphate</name>
        <dbReference type="ChEBI" id="CHEBI:128769"/>
    </ligand>
</feature>
<feature type="binding site" evidence="1">
    <location>
        <position position="167"/>
    </location>
    <ligand>
        <name>(2E)-4-hydroxy-3-methylbut-2-enyl diphosphate</name>
        <dbReference type="ChEBI" id="CHEBI:128753"/>
    </ligand>
</feature>
<feature type="binding site" evidence="1">
    <location>
        <position position="197"/>
    </location>
    <ligand>
        <name>[4Fe-4S] cluster</name>
        <dbReference type="ChEBI" id="CHEBI:49883"/>
    </ligand>
</feature>
<feature type="binding site" evidence="1">
    <location>
        <position position="225"/>
    </location>
    <ligand>
        <name>(2E)-4-hydroxy-3-methylbut-2-enyl diphosphate</name>
        <dbReference type="ChEBI" id="CHEBI:128753"/>
    </ligand>
</feature>
<feature type="binding site" evidence="1">
    <location>
        <position position="225"/>
    </location>
    <ligand>
        <name>dimethylallyl diphosphate</name>
        <dbReference type="ChEBI" id="CHEBI:57623"/>
    </ligand>
</feature>
<feature type="binding site" evidence="1">
    <location>
        <position position="225"/>
    </location>
    <ligand>
        <name>isopentenyl diphosphate</name>
        <dbReference type="ChEBI" id="CHEBI:128769"/>
    </ligand>
</feature>
<feature type="binding site" evidence="1">
    <location>
        <position position="226"/>
    </location>
    <ligand>
        <name>(2E)-4-hydroxy-3-methylbut-2-enyl diphosphate</name>
        <dbReference type="ChEBI" id="CHEBI:128753"/>
    </ligand>
</feature>
<feature type="binding site" evidence="1">
    <location>
        <position position="226"/>
    </location>
    <ligand>
        <name>dimethylallyl diphosphate</name>
        <dbReference type="ChEBI" id="CHEBI:57623"/>
    </ligand>
</feature>
<feature type="binding site" evidence="1">
    <location>
        <position position="226"/>
    </location>
    <ligand>
        <name>isopentenyl diphosphate</name>
        <dbReference type="ChEBI" id="CHEBI:128769"/>
    </ligand>
</feature>
<feature type="binding site" evidence="1">
    <location>
        <position position="227"/>
    </location>
    <ligand>
        <name>(2E)-4-hydroxy-3-methylbut-2-enyl diphosphate</name>
        <dbReference type="ChEBI" id="CHEBI:128753"/>
    </ligand>
</feature>
<feature type="binding site" evidence="1">
    <location>
        <position position="227"/>
    </location>
    <ligand>
        <name>dimethylallyl diphosphate</name>
        <dbReference type="ChEBI" id="CHEBI:57623"/>
    </ligand>
</feature>
<feature type="binding site" evidence="1">
    <location>
        <position position="227"/>
    </location>
    <ligand>
        <name>isopentenyl diphosphate</name>
        <dbReference type="ChEBI" id="CHEBI:128769"/>
    </ligand>
</feature>
<feature type="binding site" evidence="1">
    <location>
        <position position="269"/>
    </location>
    <ligand>
        <name>(2E)-4-hydroxy-3-methylbut-2-enyl diphosphate</name>
        <dbReference type="ChEBI" id="CHEBI:128753"/>
    </ligand>
</feature>
<feature type="binding site" evidence="1">
    <location>
        <position position="269"/>
    </location>
    <ligand>
        <name>dimethylallyl diphosphate</name>
        <dbReference type="ChEBI" id="CHEBI:57623"/>
    </ligand>
</feature>
<feature type="binding site" evidence="1">
    <location>
        <position position="269"/>
    </location>
    <ligand>
        <name>isopentenyl diphosphate</name>
        <dbReference type="ChEBI" id="CHEBI:128769"/>
    </ligand>
</feature>
<gene>
    <name evidence="1" type="primary">ispH</name>
    <name type="ordered locus">EcolC_3626</name>
</gene>
<accession>B1IRE6</accession>
<dbReference type="EC" id="1.17.7.4" evidence="1"/>
<dbReference type="EMBL" id="CP000946">
    <property type="protein sequence ID" value="ACA79239.1"/>
    <property type="molecule type" value="Genomic_DNA"/>
</dbReference>
<dbReference type="RefSeq" id="WP_001166405.1">
    <property type="nucleotide sequence ID" value="NZ_MTFT01000035.1"/>
</dbReference>
<dbReference type="SMR" id="B1IRE6"/>
<dbReference type="KEGG" id="ecl:EcolC_3626"/>
<dbReference type="HOGENOM" id="CLU_027486_1_0_6"/>
<dbReference type="UniPathway" id="UPA00056">
    <property type="reaction ID" value="UER00097"/>
</dbReference>
<dbReference type="UniPathway" id="UPA00059">
    <property type="reaction ID" value="UER00105"/>
</dbReference>
<dbReference type="GO" id="GO:0051539">
    <property type="term" value="F:4 iron, 4 sulfur cluster binding"/>
    <property type="evidence" value="ECO:0007669"/>
    <property type="project" value="UniProtKB-UniRule"/>
</dbReference>
<dbReference type="GO" id="GO:0051745">
    <property type="term" value="F:4-hydroxy-3-methylbut-2-enyl diphosphate reductase activity"/>
    <property type="evidence" value="ECO:0007669"/>
    <property type="project" value="UniProtKB-UniRule"/>
</dbReference>
<dbReference type="GO" id="GO:0046872">
    <property type="term" value="F:metal ion binding"/>
    <property type="evidence" value="ECO:0007669"/>
    <property type="project" value="UniProtKB-KW"/>
</dbReference>
<dbReference type="GO" id="GO:0050992">
    <property type="term" value="P:dimethylallyl diphosphate biosynthetic process"/>
    <property type="evidence" value="ECO:0007669"/>
    <property type="project" value="UniProtKB-UniRule"/>
</dbReference>
<dbReference type="GO" id="GO:0019288">
    <property type="term" value="P:isopentenyl diphosphate biosynthetic process, methylerythritol 4-phosphate pathway"/>
    <property type="evidence" value="ECO:0007669"/>
    <property type="project" value="UniProtKB-UniRule"/>
</dbReference>
<dbReference type="GO" id="GO:0016114">
    <property type="term" value="P:terpenoid biosynthetic process"/>
    <property type="evidence" value="ECO:0007669"/>
    <property type="project" value="UniProtKB-UniRule"/>
</dbReference>
<dbReference type="CDD" id="cd13944">
    <property type="entry name" value="lytB_ispH"/>
    <property type="match status" value="1"/>
</dbReference>
<dbReference type="FunFam" id="3.40.1010.20:FF:000001">
    <property type="entry name" value="4-hydroxy-3-methylbut-2-enyl diphosphate reductase"/>
    <property type="match status" value="1"/>
</dbReference>
<dbReference type="FunFam" id="3.40.50.11270:FF:000001">
    <property type="entry name" value="4-hydroxy-3-methylbut-2-enyl diphosphate reductase"/>
    <property type="match status" value="1"/>
</dbReference>
<dbReference type="Gene3D" id="3.40.50.11270">
    <property type="match status" value="1"/>
</dbReference>
<dbReference type="Gene3D" id="3.40.1010.20">
    <property type="entry name" value="4-hydroxy-3-methylbut-2-enyl diphosphate reductase, catalytic domain"/>
    <property type="match status" value="2"/>
</dbReference>
<dbReference type="HAMAP" id="MF_00191">
    <property type="entry name" value="IspH"/>
    <property type="match status" value="1"/>
</dbReference>
<dbReference type="InterPro" id="IPR003451">
    <property type="entry name" value="LytB/IspH"/>
</dbReference>
<dbReference type="NCBIfam" id="TIGR00216">
    <property type="entry name" value="ispH_lytB"/>
    <property type="match status" value="1"/>
</dbReference>
<dbReference type="NCBIfam" id="NF002188">
    <property type="entry name" value="PRK01045.1-2"/>
    <property type="match status" value="1"/>
</dbReference>
<dbReference type="NCBIfam" id="NF002190">
    <property type="entry name" value="PRK01045.1-4"/>
    <property type="match status" value="1"/>
</dbReference>
<dbReference type="PANTHER" id="PTHR30426">
    <property type="entry name" value="4-HYDROXY-3-METHYLBUT-2-ENYL DIPHOSPHATE REDUCTASE"/>
    <property type="match status" value="1"/>
</dbReference>
<dbReference type="PANTHER" id="PTHR30426:SF0">
    <property type="entry name" value="4-HYDROXY-3-METHYLBUT-2-ENYL DIPHOSPHATE REDUCTASE"/>
    <property type="match status" value="1"/>
</dbReference>
<dbReference type="Pfam" id="PF02401">
    <property type="entry name" value="LYTB"/>
    <property type="match status" value="1"/>
</dbReference>
<protein>
    <recommendedName>
        <fullName evidence="1">4-hydroxy-3-methylbut-2-enyl diphosphate reductase</fullName>
        <shortName evidence="1">HMBPP reductase</shortName>
        <ecNumber evidence="1">1.17.7.4</ecNumber>
    </recommendedName>
</protein>
<organism>
    <name type="scientific">Escherichia coli (strain ATCC 8739 / DSM 1576 / NBRC 3972 / NCIMB 8545 / WDCM 00012 / Crooks)</name>
    <dbReference type="NCBI Taxonomy" id="481805"/>
    <lineage>
        <taxon>Bacteria</taxon>
        <taxon>Pseudomonadati</taxon>
        <taxon>Pseudomonadota</taxon>
        <taxon>Gammaproteobacteria</taxon>
        <taxon>Enterobacterales</taxon>
        <taxon>Enterobacteriaceae</taxon>
        <taxon>Escherichia</taxon>
    </lineage>
</organism>
<evidence type="ECO:0000255" key="1">
    <source>
        <dbReference type="HAMAP-Rule" id="MF_00191"/>
    </source>
</evidence>
<comment type="function">
    <text evidence="1">Catalyzes the conversion of 1-hydroxy-2-methyl-2-(E)-butenyl 4-diphosphate (HMBPP) into a mixture of isopentenyl diphosphate (IPP) and dimethylallyl diphosphate (DMAPP). Acts in the terminal step of the DOXP/MEP pathway for isoprenoid precursor biosynthesis.</text>
</comment>
<comment type="catalytic activity">
    <reaction evidence="1">
        <text>isopentenyl diphosphate + 2 oxidized [2Fe-2S]-[ferredoxin] + H2O = (2E)-4-hydroxy-3-methylbut-2-enyl diphosphate + 2 reduced [2Fe-2S]-[ferredoxin] + 2 H(+)</text>
        <dbReference type="Rhea" id="RHEA:24488"/>
        <dbReference type="Rhea" id="RHEA-COMP:10000"/>
        <dbReference type="Rhea" id="RHEA-COMP:10001"/>
        <dbReference type="ChEBI" id="CHEBI:15377"/>
        <dbReference type="ChEBI" id="CHEBI:15378"/>
        <dbReference type="ChEBI" id="CHEBI:33737"/>
        <dbReference type="ChEBI" id="CHEBI:33738"/>
        <dbReference type="ChEBI" id="CHEBI:128753"/>
        <dbReference type="ChEBI" id="CHEBI:128769"/>
        <dbReference type="EC" id="1.17.7.4"/>
    </reaction>
</comment>
<comment type="catalytic activity">
    <reaction evidence="1">
        <text>dimethylallyl diphosphate + 2 oxidized [2Fe-2S]-[ferredoxin] + H2O = (2E)-4-hydroxy-3-methylbut-2-enyl diphosphate + 2 reduced [2Fe-2S]-[ferredoxin] + 2 H(+)</text>
        <dbReference type="Rhea" id="RHEA:24825"/>
        <dbReference type="Rhea" id="RHEA-COMP:10000"/>
        <dbReference type="Rhea" id="RHEA-COMP:10001"/>
        <dbReference type="ChEBI" id="CHEBI:15377"/>
        <dbReference type="ChEBI" id="CHEBI:15378"/>
        <dbReference type="ChEBI" id="CHEBI:33737"/>
        <dbReference type="ChEBI" id="CHEBI:33738"/>
        <dbReference type="ChEBI" id="CHEBI:57623"/>
        <dbReference type="ChEBI" id="CHEBI:128753"/>
        <dbReference type="EC" id="1.17.7.4"/>
    </reaction>
</comment>
<comment type="cofactor">
    <cofactor evidence="1">
        <name>[4Fe-4S] cluster</name>
        <dbReference type="ChEBI" id="CHEBI:49883"/>
    </cofactor>
    <text evidence="1">Binds 1 [4Fe-4S] cluster per subunit.</text>
</comment>
<comment type="pathway">
    <text evidence="1">Isoprenoid biosynthesis; dimethylallyl diphosphate biosynthesis; dimethylallyl diphosphate from (2E)-4-hydroxy-3-methylbutenyl diphosphate: step 1/1.</text>
</comment>
<comment type="pathway">
    <text evidence="1">Isoprenoid biosynthesis; isopentenyl diphosphate biosynthesis via DXP pathway; isopentenyl diphosphate from 1-deoxy-D-xylulose 5-phosphate: step 6/6.</text>
</comment>
<comment type="subunit">
    <text evidence="1">Homodimer.</text>
</comment>
<comment type="similarity">
    <text evidence="1">Belongs to the IspH family.</text>
</comment>
<proteinExistence type="inferred from homology"/>